<reference key="1">
    <citation type="journal article" date="2017" name="Sci. Rep.">
        <title>Comparative analysis of the genomes of Stylophora pistillata and Acropora digitifera provides evidence for extensive differences between species of corals.</title>
        <authorList>
            <person name="Voolstra C.R."/>
            <person name="Li Y."/>
            <person name="Liew Y.J."/>
            <person name="Baumgarten S."/>
            <person name="Zoccola D."/>
            <person name="Flot J.F."/>
            <person name="Tambutte S."/>
            <person name="Allemand D."/>
            <person name="Aranda M."/>
        </authorList>
    </citation>
    <scope>NUCLEOTIDE SEQUENCE [LARGE SCALE GENOMIC DNA]</scope>
</reference>
<reference key="2">
    <citation type="journal article" date="2023" name="Cell">
        <title>cGLRs are a diverse family of pattern recognition receptors in innate immunity.</title>
        <authorList>
            <person name="Li Y."/>
            <person name="Slavik K.M."/>
            <person name="Toyoda H.C."/>
            <person name="Morehouse B.R."/>
            <person name="de Oliveira Mann C.C."/>
            <person name="Elek A."/>
            <person name="Levy S."/>
            <person name="Wang Z."/>
            <person name="Mears K.S."/>
            <person name="Liu J."/>
            <person name="Kashin D."/>
            <person name="Guo X."/>
            <person name="Mass T."/>
            <person name="Sebe-Pedros A."/>
            <person name="Schwede F."/>
            <person name="Kranzusch P.J."/>
        </authorList>
    </citation>
    <scope>FUNCTION</scope>
</reference>
<protein>
    <recommendedName>
        <fullName evidence="6">Stimulator of interferon genes protein 2</fullName>
        <shortName evidence="5">Sp-STING2</shortName>
    </recommendedName>
</protein>
<feature type="chain" id="PRO_0000460008" description="Stimulator of interferon genes protein 2">
    <location>
        <begin position="1"/>
        <end position="375"/>
    </location>
</feature>
<feature type="transmembrane region" description="Helical" evidence="3">
    <location>
        <begin position="30"/>
        <end position="50"/>
    </location>
</feature>
<feature type="transmembrane region" description="Helical" evidence="3">
    <location>
        <begin position="60"/>
        <end position="80"/>
    </location>
</feature>
<feature type="transmembrane region" description="Helical" evidence="3">
    <location>
        <begin position="114"/>
        <end position="134"/>
    </location>
</feature>
<feature type="transmembrane region" description="Helical" evidence="3">
    <location>
        <begin position="144"/>
        <end position="164"/>
    </location>
</feature>
<feature type="binding site" evidence="1">
    <location>
        <position position="195"/>
    </location>
    <ligand>
        <name>2',3'-cGAMP</name>
        <dbReference type="ChEBI" id="CHEBI:143093"/>
    </ligand>
</feature>
<feature type="binding site" evidence="1">
    <location>
        <position position="256"/>
    </location>
    <ligand>
        <name>2',3'-cGAMP</name>
        <dbReference type="ChEBI" id="CHEBI:143093"/>
    </ligand>
</feature>
<feature type="binding site" evidence="1">
    <location>
        <position position="262"/>
    </location>
    <ligand>
        <name>2',3'-cGAMP</name>
        <dbReference type="ChEBI" id="CHEBI:143093"/>
    </ligand>
</feature>
<gene>
    <name evidence="5" type="primary">STING2</name>
    <name evidence="7" type="ORF">AWC38_SpisGene6020</name>
</gene>
<accession>A0A2B4SJA1</accession>
<comment type="function">
    <text evidence="2 4">Facilitator of innate immune signaling that acts as a sensor of second messenger signals produced by cyclic GMP-AMP synthase-like receptors (cGLRs) and promotes the production of type I interferon (PubMed:37379839). Innate immune response is triggered in response to nucleotides from viruses and bacteria delivered to the cytoplasm (PubMed:37379839). Acts by binding cyclic dinucleotides: recognizes and binds 2'-3' linked cGAMP (2'-3'-cGAMP), a second messengers produced by cGLRs in response to nucleotides in the cytosol, such as double-stranded RNA (dsRNA) (PubMed:37379839). Upon binding to 2'-3'-cGAMP, oligomerizes and promotes the recruitment and subsequent activation of the transcription factor IRF3 to induce expression of type I interferon (By similarity).</text>
</comment>
<comment type="subcellular location">
    <subcellularLocation>
        <location evidence="3">Membrane</location>
        <topology evidence="3">Multi-pass membrane protein</topology>
    </subcellularLocation>
</comment>
<comment type="similarity">
    <text evidence="6">Belongs to the STING family.</text>
</comment>
<dbReference type="EMBL" id="LSMT01000069">
    <property type="protein sequence ID" value="PFX29189.1"/>
    <property type="molecule type" value="Genomic_DNA"/>
</dbReference>
<dbReference type="SMR" id="A0A2B4SJA1"/>
<dbReference type="STRING" id="50429.A0A2B4SJA1"/>
<dbReference type="EnsemblMetazoa" id="XM_022928901.1">
    <property type="protein sequence ID" value="XP_022784636.1"/>
    <property type="gene ID" value="LOC111325160"/>
</dbReference>
<dbReference type="OrthoDB" id="6053839at2759"/>
<dbReference type="Proteomes" id="UP000225706">
    <property type="component" value="Unassembled WGS sequence"/>
</dbReference>
<dbReference type="GO" id="GO:0005776">
    <property type="term" value="C:autophagosome"/>
    <property type="evidence" value="ECO:0007669"/>
    <property type="project" value="TreeGrafter"/>
</dbReference>
<dbReference type="GO" id="GO:0005789">
    <property type="term" value="C:endoplasmic reticulum membrane"/>
    <property type="evidence" value="ECO:0007669"/>
    <property type="project" value="TreeGrafter"/>
</dbReference>
<dbReference type="GO" id="GO:0061507">
    <property type="term" value="F:2',3'-cyclic GMP-AMP binding"/>
    <property type="evidence" value="ECO:0000314"/>
    <property type="project" value="UniProtKB"/>
</dbReference>
<dbReference type="GO" id="GO:0035438">
    <property type="term" value="F:cyclic-di-GMP binding"/>
    <property type="evidence" value="ECO:0007669"/>
    <property type="project" value="TreeGrafter"/>
</dbReference>
<dbReference type="GO" id="GO:0002218">
    <property type="term" value="P:activation of innate immune response"/>
    <property type="evidence" value="ECO:0007669"/>
    <property type="project" value="InterPro"/>
</dbReference>
<dbReference type="GO" id="GO:0000045">
    <property type="term" value="P:autophagosome assembly"/>
    <property type="evidence" value="ECO:0007669"/>
    <property type="project" value="TreeGrafter"/>
</dbReference>
<dbReference type="GO" id="GO:0045087">
    <property type="term" value="P:innate immune response"/>
    <property type="evidence" value="ECO:0007669"/>
    <property type="project" value="UniProtKB-KW"/>
</dbReference>
<dbReference type="GO" id="GO:0016239">
    <property type="term" value="P:positive regulation of macroautophagy"/>
    <property type="evidence" value="ECO:0007669"/>
    <property type="project" value="TreeGrafter"/>
</dbReference>
<dbReference type="GO" id="GO:0032481">
    <property type="term" value="P:positive regulation of type I interferon production"/>
    <property type="evidence" value="ECO:0007669"/>
    <property type="project" value="InterPro"/>
</dbReference>
<dbReference type="GO" id="GO:0061709">
    <property type="term" value="P:reticulophagy"/>
    <property type="evidence" value="ECO:0007669"/>
    <property type="project" value="TreeGrafter"/>
</dbReference>
<dbReference type="FunFam" id="1.20.5.5200:FF:000001">
    <property type="entry name" value="Stimulator of interferon genes protein"/>
    <property type="match status" value="1"/>
</dbReference>
<dbReference type="Gene3D" id="1.20.5.5200">
    <property type="match status" value="1"/>
</dbReference>
<dbReference type="Gene3D" id="3.40.50.12100">
    <property type="entry name" value="Stimulator of interferon genes protein"/>
    <property type="match status" value="1"/>
</dbReference>
<dbReference type="InterPro" id="IPR029158">
    <property type="entry name" value="STING"/>
</dbReference>
<dbReference type="InterPro" id="IPR038623">
    <property type="entry name" value="STING_C_sf"/>
</dbReference>
<dbReference type="InterPro" id="IPR055432">
    <property type="entry name" value="STING_LBD"/>
</dbReference>
<dbReference type="InterPro" id="IPR055434">
    <property type="entry name" value="STING_TM"/>
</dbReference>
<dbReference type="PANTHER" id="PTHR34339">
    <property type="entry name" value="STIMULATOR OF INTERFERON GENES PROTEIN"/>
    <property type="match status" value="1"/>
</dbReference>
<dbReference type="PANTHER" id="PTHR34339:SF1">
    <property type="entry name" value="STIMULATOR OF INTERFERON GENES PROTEIN"/>
    <property type="match status" value="1"/>
</dbReference>
<dbReference type="Pfam" id="PF15009">
    <property type="entry name" value="STING_LBD"/>
    <property type="match status" value="1"/>
</dbReference>
<dbReference type="Pfam" id="PF23417">
    <property type="entry name" value="STING_TM"/>
    <property type="match status" value="1"/>
</dbReference>
<evidence type="ECO:0000250" key="1">
    <source>
        <dbReference type="UniProtKB" id="A0A2B4SJD2"/>
    </source>
</evidence>
<evidence type="ECO:0000250" key="2">
    <source>
        <dbReference type="UniProtKB" id="Q86WV6"/>
    </source>
</evidence>
<evidence type="ECO:0000255" key="3"/>
<evidence type="ECO:0000269" key="4">
    <source>
    </source>
</evidence>
<evidence type="ECO:0000303" key="5">
    <source>
    </source>
</evidence>
<evidence type="ECO:0000305" key="6"/>
<evidence type="ECO:0000312" key="7">
    <source>
        <dbReference type="EMBL" id="PFX29189.1"/>
    </source>
</evidence>
<keyword id="KW-0391">Immunity</keyword>
<keyword id="KW-0399">Innate immunity</keyword>
<keyword id="KW-0472">Membrane</keyword>
<keyword id="KW-1185">Reference proteome</keyword>
<keyword id="KW-0812">Transmembrane</keyword>
<keyword id="KW-1133">Transmembrane helix</keyword>
<name>STNG2_STYPI</name>
<proteinExistence type="inferred from homology"/>
<organism>
    <name type="scientific">Stylophora pistillata</name>
    <name type="common">Smooth cauliflower coral</name>
    <dbReference type="NCBI Taxonomy" id="50429"/>
    <lineage>
        <taxon>Eukaryota</taxon>
        <taxon>Metazoa</taxon>
        <taxon>Cnidaria</taxon>
        <taxon>Anthozoa</taxon>
        <taxon>Hexacorallia</taxon>
        <taxon>Scleractinia</taxon>
        <taxon>Astrocoeniina</taxon>
        <taxon>Pocilloporidae</taxon>
        <taxon>Stylophora</taxon>
    </lineage>
</organism>
<sequence length="375" mass="41928">MADNAHLRGTGVVQQENNGFGPLSKRRGNTATVTSAIVFVISGALLLLAVRKEKATSEGIHFLVFTAALLTLSFVLGELVRRFCLVSEELKHRHARYQGNWKGVLKTTFTFDNAGSILVVAISSALTLCFVLYEQYEAFSGPGYPILFFLNCLVVPQLSFLVGLRQLSPVETSDLNEKENKNVADGLAWSYYFGYLKLVLPRLGDRIAESDTYRHKITVEKLFILLPKTCYTFDAITKADPRVKWAGKLPASKINRAGILERSYQHAVHRIEMPLPDGTVEEYHFVLEYATPLMSLYEMSDHAKAPLTGPERDHQVVLFIRKLKEILDDSEECRGKYELVPISGNDTNKIADVLVGMHGAASIDLEDETDEQTKQ</sequence>